<protein>
    <recommendedName>
        <fullName>Protein-tyrosine kinase 6</fullName>
        <ecNumber evidence="8 25 26">2.7.10.2</ecNumber>
    </recommendedName>
    <alternativeName>
        <fullName>Breast tumor kinase</fullName>
    </alternativeName>
    <alternativeName>
        <fullName>Tyrosine-protein kinase BRK</fullName>
    </alternativeName>
</protein>
<accession>Q13882</accession>
<accession>B2RCR3</accession>
<accession>B4DW46</accession>
<accession>Q58F01</accession>
<proteinExistence type="evidence at protein level"/>
<gene>
    <name type="primary">PTK6</name>
    <name type="synonym">BRK</name>
</gene>
<feature type="chain" id="PRO_0000088133" description="Protein-tyrosine kinase 6">
    <location>
        <begin position="1"/>
        <end position="451"/>
    </location>
</feature>
<feature type="domain" description="SH3" evidence="4">
    <location>
        <begin position="8"/>
        <end position="72"/>
    </location>
</feature>
<feature type="domain" description="SH2" evidence="3">
    <location>
        <begin position="78"/>
        <end position="170"/>
    </location>
</feature>
<feature type="domain" description="Protein kinase" evidence="2">
    <location>
        <begin position="191"/>
        <end position="445"/>
    </location>
</feature>
<feature type="region of interest" description="Linker">
    <location>
        <begin position="171"/>
        <end position="190"/>
    </location>
</feature>
<feature type="active site" description="Proton acceptor" evidence="2 5">
    <location>
        <position position="312"/>
    </location>
</feature>
<feature type="binding site" evidence="2">
    <location>
        <begin position="197"/>
        <end position="205"/>
    </location>
    <ligand>
        <name>ATP</name>
        <dbReference type="ChEBI" id="CHEBI:30616"/>
    </ligand>
</feature>
<feature type="binding site" evidence="2 32 33">
    <location>
        <position position="219"/>
    </location>
    <ligand>
        <name>ATP</name>
        <dbReference type="ChEBI" id="CHEBI:30616"/>
    </ligand>
</feature>
<feature type="modified residue" description="Phosphotyrosine; by autocatalysis" evidence="8">
    <location>
        <position position="13"/>
    </location>
</feature>
<feature type="modified residue" description="Phosphotyrosine; by autocatalysis" evidence="8">
    <location>
        <position position="61"/>
    </location>
</feature>
<feature type="modified residue" description="Phosphotyrosine; by autocatalysis" evidence="8">
    <location>
        <position position="66"/>
    </location>
</feature>
<feature type="modified residue" description="Phosphotyrosine; by autocatalysis" evidence="8 34">
    <location>
        <position position="114"/>
    </location>
</feature>
<feature type="modified residue" description="Phosphotyrosine; by autocatalysis" evidence="8">
    <location>
        <position position="342"/>
    </location>
</feature>
<feature type="modified residue" description="Phosphotyrosine; by autocatalysis" evidence="8">
    <location>
        <position position="351"/>
    </location>
</feature>
<feature type="modified residue" description="Phosphotyrosine" evidence="6">
    <location>
        <position position="447"/>
    </location>
</feature>
<feature type="splice variant" id="VSP_042066" description="In isoform 2." evidence="29 30">
    <original>WFFGCISRSEAVRRLQAEGNATGAFLIRVSEKPSADYVLSVRDTQAVRHYKIWRRAG</original>
    <variation>AGHAGCAALQDLAACRGPAAPERGGVLPQPARACELPQGPEPVPRPAAGRALPEARA</variation>
    <location>
        <begin position="78"/>
        <end position="134"/>
    </location>
</feature>
<feature type="splice variant" id="VSP_042067" description="In isoform 2." evidence="29 30">
    <location>
        <begin position="135"/>
        <end position="451"/>
    </location>
</feature>
<feature type="sequence variant" id="VAR_041760" description="In a renal papillary sample; somatic mutation." evidence="18">
    <original>L</original>
    <variation>F</variation>
    <location>
        <position position="16"/>
    </location>
</feature>
<feature type="sequence variant" id="VAR_041761" description="In dbSNP:rs56145017." evidence="18">
    <original>A</original>
    <variation>T</variation>
    <location>
        <position position="436"/>
    </location>
</feature>
<feature type="mutagenesis site" description="Strong decrease in STAP2 phosphorylation. Markedly decreased interaction between SH3 domain the linker region." evidence="7 19">
    <original>W</original>
    <variation>A</variation>
    <location>
        <position position="44"/>
    </location>
</feature>
<feature type="mutagenesis site" description="Decrease in STAP2 phosphorylation." evidence="7">
    <original>Y</original>
    <variation>A</variation>
    <location>
        <position position="66"/>
    </location>
</feature>
<feature type="mutagenesis site" description="Abolishes interaction with ARAP1." evidence="24">
    <original>R</original>
    <variation>A</variation>
    <location>
        <position position="105"/>
    </location>
</feature>
<feature type="mutagenesis site" description="Decrease in STAP2 phosphorylation." evidence="7">
    <original>R</original>
    <variation>L</variation>
    <location>
        <position position="105"/>
    </location>
</feature>
<feature type="mutagenesis site" description="Abrogates interaction between PTK6-domain kinase and PTK6-linker. Abrogates autophosphorylation and phosphorylation of KHDRBS1." evidence="15">
    <original>W</original>
    <variation>A</variation>
    <location>
        <position position="184"/>
    </location>
</feature>
<feature type="mutagenesis site" description="Abolishes kinase activity and cell transformation, and phosphorylation of STAP2. Reduces interaction with ARAP1." evidence="7 10 24 27">
    <original>K</original>
    <variation>M</variation>
    <location>
        <position position="219"/>
    </location>
</feature>
<feature type="mutagenesis site" description="Abolishes kinase activity." evidence="25">
    <original>K</original>
    <variation>R</variation>
    <location>
        <position position="219"/>
    </location>
</feature>
<feature type="mutagenesis site" description="3-fold lower specific kinase activity. Decreased, but still significant, autophosphorylation. Decreased, but still significant, autophosphorylation; when associated with A-447." evidence="8">
    <original>Y</original>
    <variation>A</variation>
    <location>
        <position position="342"/>
    </location>
</feature>
<feature type="mutagenesis site" description="Decrease in transforming potential and increase in the kinase activity level. Decreased, but still significant, autophosphorylation; when associated with A-342." evidence="8 10 27">
    <original>Y</original>
    <variation>F</variation>
    <location>
        <position position="447"/>
    </location>
</feature>
<feature type="strand" evidence="36">
    <location>
        <begin position="12"/>
        <end position="14"/>
    </location>
</feature>
<feature type="strand" evidence="36">
    <location>
        <begin position="35"/>
        <end position="40"/>
    </location>
</feature>
<feature type="strand" evidence="36">
    <location>
        <begin position="45"/>
        <end position="50"/>
    </location>
</feature>
<feature type="strand" evidence="36">
    <location>
        <begin position="56"/>
        <end position="62"/>
    </location>
</feature>
<feature type="turn" evidence="36">
    <location>
        <begin position="64"/>
        <end position="66"/>
    </location>
</feature>
<feature type="strand" evidence="36">
    <location>
        <begin position="67"/>
        <end position="70"/>
    </location>
</feature>
<feature type="helix" evidence="35">
    <location>
        <begin position="85"/>
        <end position="92"/>
    </location>
</feature>
<feature type="strand" evidence="35">
    <location>
        <begin position="102"/>
        <end position="106"/>
    </location>
</feature>
<feature type="strand" evidence="35">
    <location>
        <begin position="108"/>
        <end position="112"/>
    </location>
</feature>
<feature type="strand" evidence="35">
    <location>
        <begin position="114"/>
        <end position="118"/>
    </location>
</feature>
<feature type="strand" evidence="35">
    <location>
        <begin position="125"/>
        <end position="131"/>
    </location>
</feature>
<feature type="strand" evidence="35">
    <location>
        <begin position="133"/>
        <end position="135"/>
    </location>
</feature>
<feature type="strand" evidence="35">
    <location>
        <begin position="137"/>
        <end position="140"/>
    </location>
</feature>
<feature type="strand" evidence="35">
    <location>
        <begin position="143"/>
        <end position="147"/>
    </location>
</feature>
<feature type="helix" evidence="35">
    <location>
        <begin position="148"/>
        <end position="157"/>
    </location>
</feature>
<feature type="strand" evidence="35">
    <location>
        <begin position="162"/>
        <end position="164"/>
    </location>
</feature>
<feature type="helix" evidence="40">
    <location>
        <begin position="188"/>
        <end position="190"/>
    </location>
</feature>
<feature type="strand" evidence="40">
    <location>
        <begin position="191"/>
        <end position="200"/>
    </location>
</feature>
<feature type="strand" evidence="40">
    <location>
        <begin position="203"/>
        <end position="210"/>
    </location>
</feature>
<feature type="turn" evidence="40">
    <location>
        <begin position="211"/>
        <end position="213"/>
    </location>
</feature>
<feature type="strand" evidence="40">
    <location>
        <begin position="214"/>
        <end position="221"/>
    </location>
</feature>
<feature type="helix" evidence="40">
    <location>
        <begin position="223"/>
        <end position="225"/>
    </location>
</feature>
<feature type="helix" evidence="40">
    <location>
        <begin position="229"/>
        <end position="240"/>
    </location>
</feature>
<feature type="strand" evidence="40">
    <location>
        <begin position="250"/>
        <end position="254"/>
    </location>
</feature>
<feature type="strand" evidence="40">
    <location>
        <begin position="256"/>
        <end position="264"/>
    </location>
</feature>
<feature type="strand" evidence="39">
    <location>
        <begin position="268"/>
        <end position="271"/>
    </location>
</feature>
<feature type="helix" evidence="40">
    <location>
        <begin position="272"/>
        <end position="278"/>
    </location>
</feature>
<feature type="turn" evidence="38">
    <location>
        <begin position="281"/>
        <end position="283"/>
    </location>
</feature>
<feature type="helix" evidence="40">
    <location>
        <begin position="286"/>
        <end position="305"/>
    </location>
</feature>
<feature type="helix" evidence="40">
    <location>
        <begin position="315"/>
        <end position="317"/>
    </location>
</feature>
<feature type="strand" evidence="40">
    <location>
        <begin position="318"/>
        <end position="320"/>
    </location>
</feature>
<feature type="helix" evidence="38">
    <location>
        <begin position="322"/>
        <end position="324"/>
    </location>
</feature>
<feature type="strand" evidence="40">
    <location>
        <begin position="326"/>
        <end position="328"/>
    </location>
</feature>
<feature type="turn" evidence="40">
    <location>
        <begin position="334"/>
        <end position="336"/>
    </location>
</feature>
<feature type="helix" evidence="40">
    <location>
        <begin position="339"/>
        <end position="342"/>
    </location>
</feature>
<feature type="helix" evidence="38">
    <location>
        <begin position="345"/>
        <end position="348"/>
    </location>
</feature>
<feature type="helix" evidence="40">
    <location>
        <begin position="351"/>
        <end position="353"/>
    </location>
</feature>
<feature type="helix" evidence="40">
    <location>
        <begin position="356"/>
        <end position="361"/>
    </location>
</feature>
<feature type="helix" evidence="40">
    <location>
        <begin position="366"/>
        <end position="380"/>
    </location>
</feature>
<feature type="turn" evidence="40">
    <location>
        <begin position="381"/>
        <end position="384"/>
    </location>
</feature>
<feature type="helix" evidence="40">
    <location>
        <begin position="393"/>
        <end position="402"/>
    </location>
</feature>
<feature type="helix" evidence="40">
    <location>
        <begin position="414"/>
        <end position="423"/>
    </location>
</feature>
<feature type="helix" evidence="40">
    <location>
        <begin position="428"/>
        <end position="430"/>
    </location>
</feature>
<feature type="helix" evidence="40">
    <location>
        <begin position="434"/>
        <end position="441"/>
    </location>
</feature>
<feature type="helix" evidence="37">
    <location>
        <begin position="442"/>
        <end position="444"/>
    </location>
</feature>
<name>PTK6_HUMAN</name>
<comment type="function">
    <text evidence="24">Non-receptor tyrosine-protein kinase implicated in the regulation of a variety of signaling pathways that control the differentiation and maintenance of normal epithelia, as well as tumor growth. Function seems to be context dependent and differ depending on cell type, as well as its intracellular localization. A number of potential nuclear and cytoplasmic substrates have been identified. These include the RNA-binding proteins: KHDRBS1/SAM68, KHDRBS2/SLM1, KHDRBS3/SLM2 and SFPQ/PSF; transcription factors: STAT3 and STAT5A/B and a variety of signaling molecules: ARHGAP35/p190RhoGAP, PXN/paxillin, BTK/ATK, STAP2/BKS. Phosphorylates the GTPase-activating protein ARAP1 following EGF stimulation which enhances EGFR signaling by delaying EGFR down-regulation (PubMed:20554524). Also associates with a variety of proteins that are likely upstream of PTK6 in various signaling pathways, or for which PTK6 may play an adapter-like role. These proteins include ADAM15, EGFR, ERBB2, ERBB3 and IRS4. In normal or non-tumorigenic tissues, PTK6 promotes cellular differentiation and apoptosis. In tumors PTK6 contributes to cancer progression by sensitizing cells to mitogenic signals and enhancing proliferation, anchorage-independent survival and migration/invasion. Association with EGFR, ERBB2, ERBB3 may contribute to mammary tumor development and growth through enhancement of EGF-induced signaling via BTK/AKT and PI3 kinase. Contributes to migration and proliferation by contributing to EGF-mediated phosphorylation of ARHGAP35/p190RhoGAP, which promotes association with RASA1/p120RasGAP, inactivating RhoA while activating RAS. EGF stimulation resulted in phosphorylation of PNX/Paxillin by PTK6 and activation of RAC1 via CRK/CrKII, thereby promoting migration and invasion. PTK6 activates STAT3 and STAT5B to promote proliferation. Nuclear PTK6 may be important for regulating growth in normal epithelia, while cytoplasmic PTK6 might activate oncogenic signaling pathways.</text>
</comment>
<comment type="function">
    <molecule>Isoform 2</molecule>
    <text>Inhibits PTK6 phosphorylation and PTK6 association with other tyrosine-phosphorylated proteins.</text>
</comment>
<comment type="catalytic activity">
    <reaction evidence="5 8 25 26">
        <text>L-tyrosyl-[protein] + ATP = O-phospho-L-tyrosyl-[protein] + ADP + H(+)</text>
        <dbReference type="Rhea" id="RHEA:10596"/>
        <dbReference type="Rhea" id="RHEA-COMP:10136"/>
        <dbReference type="Rhea" id="RHEA-COMP:20101"/>
        <dbReference type="ChEBI" id="CHEBI:15378"/>
        <dbReference type="ChEBI" id="CHEBI:30616"/>
        <dbReference type="ChEBI" id="CHEBI:46858"/>
        <dbReference type="ChEBI" id="CHEBI:61978"/>
        <dbReference type="ChEBI" id="CHEBI:456216"/>
        <dbReference type="EC" id="2.7.10.2"/>
    </reaction>
</comment>
<comment type="activity regulation">
    <text evidence="8 14 15 16 19">Activated by EGF, NRG1 and IGF1. Inhibited by SOCS3 to phosphorylate STAT3. Stabilized in the inactive form by an association between the SH3 domain and the SH2-TK linker region. Interaction between Trp-184 within SH2-TK linker region and the catalytic domain appears essential for positive regulation of kinase activity.</text>
</comment>
<comment type="biophysicochemical properties">
    <kinetics>
        <KM evidence="8">83 uM for ATP</KM>
        <Vmax evidence="8">37.0 nmol/min/mg enzyme</Vmax>
    </kinetics>
</comment>
<comment type="subunit">
    <text evidence="1 6 7 12 13 14 20 21 22 23 27">Interacts with GAP-A.p65 (By similarity). Interacts (via SH3 and SH2 domains) with KHDRBS1. Interacts (via SH3 and SH2 domains) with phosphorylated IRS4. Interacts with ADAM15. Interacts (via SH3 domain) with SFPQ. Interacts with EGFR and ERBB2. Interacts with STAP2. Interacts with PNX. Interacts with SFPQ. Interacts with PTK/ATK. Interacts with CTNNB1.</text>
</comment>
<comment type="interaction">
    <interactant intactId="EBI-1383632">
        <id>Q13882</id>
    </interactant>
    <interactant intactId="EBI-2880652">
        <id>Q08043</id>
        <label>ACTN3</label>
    </interactant>
    <organismsDiffer>false</organismsDiffer>
    <experiments>3</experiments>
</comment>
<comment type="interaction">
    <interactant intactId="EBI-1383632">
        <id>Q13882</id>
    </interactant>
    <interactant intactId="EBI-14493093">
        <id>Q3KP44</id>
        <label>ANKRD55</label>
    </interactant>
    <organismsDiffer>false</organismsDiffer>
    <experiments>3</experiments>
</comment>
<comment type="interaction">
    <interactant intactId="EBI-1383632">
        <id>Q13882</id>
    </interactant>
    <interactant intactId="EBI-744027">
        <id>Q13191</id>
        <label>CBLB</label>
    </interactant>
    <organismsDiffer>false</organismsDiffer>
    <experiments>3</experiments>
</comment>
<comment type="interaction">
    <interactant intactId="EBI-1383632">
        <id>Q13882</id>
    </interactant>
    <interactant intactId="EBI-295634">
        <id>Q16543</id>
        <label>CDC37</label>
    </interactant>
    <organismsDiffer>false</organismsDiffer>
    <experiments>4</experiments>
</comment>
<comment type="interaction">
    <interactant intactId="EBI-1383632">
        <id>Q13882</id>
    </interactant>
    <interactant intactId="EBI-746012">
        <id>Q92841</id>
        <label>DDX17</label>
    </interactant>
    <organismsDiffer>false</organismsDiffer>
    <experiments>4</experiments>
</comment>
<comment type="interaction">
    <interactant intactId="EBI-1383632">
        <id>Q13882</id>
    </interactant>
    <interactant intactId="EBI-2340258">
        <id>Q8N9I9</id>
        <label>DTX3</label>
    </interactant>
    <organismsDiffer>false</organismsDiffer>
    <experiments>3</experiments>
</comment>
<comment type="interaction">
    <interactant intactId="EBI-1383632">
        <id>Q13882</id>
    </interactant>
    <interactant intactId="EBI-2349927">
        <id>Q5JST6</id>
        <label>EFHC2</label>
    </interactant>
    <organismsDiffer>false</organismsDiffer>
    <experiments>7</experiments>
</comment>
<comment type="interaction">
    <interactant intactId="EBI-1383632">
        <id>Q13882</id>
    </interactant>
    <interactant intactId="EBI-641062">
        <id>P04626</id>
        <label>ERBB2</label>
    </interactant>
    <organismsDiffer>false</organismsDiffer>
    <experiments>4</experiments>
</comment>
<comment type="interaction">
    <interactant intactId="EBI-1383632">
        <id>Q13882</id>
    </interactant>
    <interactant intactId="EBI-949824">
        <id>O00471</id>
        <label>EXOC5</label>
    </interactant>
    <organismsDiffer>false</organismsDiffer>
    <experiments>6</experiments>
</comment>
<comment type="interaction">
    <interactant intactId="EBI-1383632">
        <id>Q13882</id>
    </interactant>
    <interactant intactId="EBI-719823">
        <id>O14526</id>
        <label>FCHO1</label>
    </interactant>
    <organismsDiffer>false</organismsDiffer>
    <experiments>4</experiments>
</comment>
<comment type="interaction">
    <interactant intactId="EBI-1383632">
        <id>Q13882</id>
    </interactant>
    <interactant intactId="EBI-517684">
        <id>Q13480</id>
        <label>GAB1</label>
    </interactant>
    <organismsDiffer>false</organismsDiffer>
    <experiments>6</experiments>
</comment>
<comment type="interaction">
    <interactant intactId="EBI-1383632">
        <id>Q13882</id>
    </interactant>
    <interactant intactId="EBI-352572">
        <id>P08238</id>
        <label>HSP90AB1</label>
    </interactant>
    <organismsDiffer>false</organismsDiffer>
    <experiments>3</experiments>
</comment>
<comment type="interaction">
    <interactant intactId="EBI-1383632">
        <id>Q13882</id>
    </interactant>
    <interactant intactId="EBI-466029">
        <id>P42858</id>
        <label>HTT</label>
    </interactant>
    <organismsDiffer>false</organismsDiffer>
    <experiments>4</experiments>
</comment>
<comment type="interaction">
    <interactant intactId="EBI-1383632">
        <id>Q13882</id>
    </interactant>
    <interactant intactId="EBI-747204">
        <id>Q9UKT9</id>
        <label>IKZF3</label>
    </interactant>
    <organismsDiffer>false</organismsDiffer>
    <experiments>3</experiments>
</comment>
<comment type="interaction">
    <interactant intactId="EBI-1383632">
        <id>Q13882</id>
    </interactant>
    <interactant intactId="EBI-742808">
        <id>Q5VWX1</id>
        <label>KHDRBS2</label>
    </interactant>
    <organismsDiffer>false</organismsDiffer>
    <experiments>4</experiments>
</comment>
<comment type="interaction">
    <interactant intactId="EBI-1383632">
        <id>Q13882</id>
    </interactant>
    <interactant intactId="EBI-10188326">
        <id>Q5T5P2-6</id>
        <label>KIAA1217</label>
    </interactant>
    <organismsDiffer>false</organismsDiffer>
    <experiments>3</experiments>
</comment>
<comment type="interaction">
    <interactant intactId="EBI-1383632">
        <id>Q13882</id>
    </interactant>
    <interactant intactId="EBI-1379503">
        <id>P10721</id>
        <label>KIT</label>
    </interactant>
    <organismsDiffer>false</organismsDiffer>
    <experiments>4</experiments>
</comment>
<comment type="interaction">
    <interactant intactId="EBI-1383632">
        <id>Q13882</id>
    </interactant>
    <interactant intactId="EBI-8025850">
        <id>O14770-4</id>
        <label>MEIS2</label>
    </interactant>
    <organismsDiffer>false</organismsDiffer>
    <experiments>3</experiments>
</comment>
<comment type="interaction">
    <interactant intactId="EBI-1383632">
        <id>Q13882</id>
    </interactant>
    <interactant intactId="EBI-2340269">
        <id>Q13064</id>
        <label>MKRN3</label>
    </interactant>
    <organismsDiffer>false</organismsDiffer>
    <experiments>3</experiments>
</comment>
<comment type="interaction">
    <interactant intactId="EBI-1383632">
        <id>Q13882</id>
    </interactant>
    <interactant intactId="EBI-5662487">
        <id>Q8TDC0</id>
        <label>MYOZ3</label>
    </interactant>
    <organismsDiffer>false</organismsDiffer>
    <experiments>3</experiments>
</comment>
<comment type="interaction">
    <interactant intactId="EBI-1383632">
        <id>Q13882</id>
    </interactant>
    <interactant intactId="EBI-748265">
        <id>P78337</id>
        <label>PITX1</label>
    </interactant>
    <organismsDiffer>false</organismsDiffer>
    <experiments>3</experiments>
</comment>
<comment type="interaction">
    <interactant intactId="EBI-1383632">
        <id>Q13882</id>
    </interactant>
    <interactant intactId="EBI-11320284">
        <id>Q9NQX0</id>
        <label>PRDM6</label>
    </interactant>
    <organismsDiffer>false</organismsDiffer>
    <experiments>3</experiments>
</comment>
<comment type="interaction">
    <interactant intactId="EBI-1383632">
        <id>Q13882</id>
    </interactant>
    <interactant intactId="EBI-1383632">
        <id>Q13882</id>
        <label>PTK6</label>
    </interactant>
    <organismsDiffer>false</organismsDiffer>
    <experiments>3</experiments>
</comment>
<comment type="interaction">
    <interactant intactId="EBI-1383632">
        <id>Q13882</id>
    </interactant>
    <interactant intactId="EBI-307352">
        <id>Q04864</id>
        <label>REL</label>
    </interactant>
    <organismsDiffer>false</organismsDiffer>
    <experiments>3</experiments>
</comment>
<comment type="interaction">
    <interactant intactId="EBI-1383632">
        <id>Q13882</id>
    </interactant>
    <interactant intactId="EBI-355453">
        <id>P23246</id>
        <label>SFPQ</label>
    </interactant>
    <organismsDiffer>false</organismsDiffer>
    <experiments>5</experiments>
</comment>
<comment type="interaction">
    <interactant intactId="EBI-1383632">
        <id>Q13882</id>
    </interactant>
    <interactant intactId="EBI-17630587">
        <id>Q13239-3</id>
        <label>SLA</label>
    </interactant>
    <organismsDiffer>false</organismsDiffer>
    <experiments>3</experiments>
</comment>
<comment type="interaction">
    <interactant intactId="EBI-1383632">
        <id>Q13882</id>
    </interactant>
    <interactant intactId="EBI-957615">
        <id>O00401</id>
        <label>WASL</label>
    </interactant>
    <organismsDiffer>false</organismsDiffer>
    <experiments>3</experiments>
</comment>
<comment type="interaction">
    <interactant intactId="EBI-1383632">
        <id>Q13882</id>
    </interactant>
    <interactant intactId="EBI-9089622">
        <id>Q9BYN7</id>
        <label>ZNF341</label>
    </interactant>
    <organismsDiffer>false</organismsDiffer>
    <experiments>3</experiments>
</comment>
<comment type="subcellular location">
    <subcellularLocation>
        <location>Cytoplasm</location>
    </subcellularLocation>
    <subcellularLocation>
        <location>Nucleus</location>
    </subcellularLocation>
    <subcellularLocation>
        <location>Cell projection</location>
        <location>Ruffle</location>
    </subcellularLocation>
    <subcellularLocation>
        <location evidence="1">Membrane</location>
    </subcellularLocation>
    <text>Colocalizes with KHDRBS1, KHDRBS2 or KHDRBS3, within the nucleus. Nuclear localization in epithelial cells of normal prostate but cytoplasmic localization in cancer prostate.</text>
</comment>
<comment type="alternative products">
    <event type="alternative splicing"/>
    <isoform>
        <id>Q13882-1</id>
        <name>1</name>
        <sequence type="displayed"/>
    </isoform>
    <isoform>
        <id>Q13882-2</id>
        <name>2</name>
        <name>ALT-PTK6</name>
        <name>LambdaM5</name>
        <sequence type="described" ref="VSP_042066 VSP_042067"/>
    </isoform>
</comment>
<comment type="tissue specificity">
    <text evidence="9 11 17 28">Epithelia-specific. Very high level in colon and high levels in small intestine and prostate, and low levels in some fetal tissues. Not expressed in breast or ovarian tissue but expressed in high percentage of breast and ovarian cancers. Also overexpressed in some metastatic melanomas, lymphomas, colon cancers, squamous cell carcinomas and prostate cancers. Also found in melanocytes. Not expressed in heart, brain, placenta, lung, liver, skeletal muscle, kidney and pancreas. Isoform 2 is present in prostate epithelial cell lines derived from normal prostate and prostate adenocarcinomas, as well as in a variety of cell lines.</text>
</comment>
<comment type="domain">
    <text>The SH3 domain plays a major role in substrate interactions. The SH2 domain of PTK6 plays a role in protein-protein interactions, but is likely more important for the regulation of catalytic activity.</text>
</comment>
<comment type="PTM">
    <text evidence="6 8 10 23">Autophosphorylated. Autophosphorylation of Tyr-342 leads to an increase of kinase activity. Tyr-447 binds to the SH2 domain when phosphorylated and negatively regulates kinase activity.</text>
</comment>
<comment type="miscellaneous">
    <text evidence="26">The inhibitors bind to the ATP-binding pocket.</text>
</comment>
<comment type="similarity">
    <text evidence="2">Belongs to the protein kinase superfamily. Tyr protein kinase family. BRK/PTK6/SIK subfamily.</text>
</comment>
<comment type="sequence caution" evidence="31">
    <conflict type="erroneous translation">
        <sequence resource="EMBL-CDS" id="BAG62908"/>
    </conflict>
    <text>Wrong choice of CDS.</text>
</comment>
<dbReference type="EC" id="2.7.10.2" evidence="8 25 26"/>
<dbReference type="EMBL" id="X78549">
    <property type="protein sequence ID" value="CAA55295.1"/>
    <property type="molecule type" value="mRNA"/>
</dbReference>
<dbReference type="EMBL" id="U61412">
    <property type="protein sequence ID" value="AAC34935.1"/>
    <property type="molecule type" value="Genomic_DNA"/>
</dbReference>
<dbReference type="EMBL" id="U61406">
    <property type="protein sequence ID" value="AAC34935.1"/>
    <property type="status" value="JOINED"/>
    <property type="molecule type" value="Genomic_DNA"/>
</dbReference>
<dbReference type="EMBL" id="U61407">
    <property type="protein sequence ID" value="AAC34935.1"/>
    <property type="status" value="JOINED"/>
    <property type="molecule type" value="Genomic_DNA"/>
</dbReference>
<dbReference type="EMBL" id="U61408">
    <property type="protein sequence ID" value="AAC34935.1"/>
    <property type="status" value="JOINED"/>
    <property type="molecule type" value="Genomic_DNA"/>
</dbReference>
<dbReference type="EMBL" id="U61409">
    <property type="protein sequence ID" value="AAC34935.1"/>
    <property type="status" value="JOINED"/>
    <property type="molecule type" value="Genomic_DNA"/>
</dbReference>
<dbReference type="EMBL" id="U61410">
    <property type="protein sequence ID" value="AAC34935.1"/>
    <property type="status" value="JOINED"/>
    <property type="molecule type" value="Genomic_DNA"/>
</dbReference>
<dbReference type="EMBL" id="U61411">
    <property type="protein sequence ID" value="AAC34935.1"/>
    <property type="status" value="JOINED"/>
    <property type="molecule type" value="Genomic_DNA"/>
</dbReference>
<dbReference type="EMBL" id="AK315232">
    <property type="protein sequence ID" value="BAG37660.1"/>
    <property type="molecule type" value="mRNA"/>
</dbReference>
<dbReference type="EMBL" id="AK301364">
    <property type="protein sequence ID" value="BAG62908.1"/>
    <property type="status" value="ALT_SEQ"/>
    <property type="molecule type" value="mRNA"/>
</dbReference>
<dbReference type="EMBL" id="AL121829">
    <property type="status" value="NOT_ANNOTATED_CDS"/>
    <property type="molecule type" value="Genomic_DNA"/>
</dbReference>
<dbReference type="EMBL" id="BC035843">
    <property type="protein sequence ID" value="AAH35843.1"/>
    <property type="molecule type" value="mRNA"/>
</dbReference>
<dbReference type="CCDS" id="CCDS13524.1">
    <molecule id="Q13882-1"/>
</dbReference>
<dbReference type="CCDS" id="CCDS74750.1">
    <molecule id="Q13882-2"/>
</dbReference>
<dbReference type="PIR" id="S49016">
    <property type="entry name" value="S49016"/>
</dbReference>
<dbReference type="RefSeq" id="NP_001243287.1">
    <molecule id="Q13882-2"/>
    <property type="nucleotide sequence ID" value="NM_001256358.2"/>
</dbReference>
<dbReference type="RefSeq" id="NP_005966.1">
    <molecule id="Q13882-1"/>
    <property type="nucleotide sequence ID" value="NM_005975.4"/>
</dbReference>
<dbReference type="PDB" id="1RJA">
    <property type="method" value="NMR"/>
    <property type="chains" value="A=75-174"/>
</dbReference>
<dbReference type="PDB" id="2KGT">
    <property type="method" value="NMR"/>
    <property type="chains" value="A=1-72"/>
</dbReference>
<dbReference type="PDB" id="5D7V">
    <property type="method" value="X-ray"/>
    <property type="resolution" value="2.33 A"/>
    <property type="chains" value="A/B/C/D=185-446"/>
</dbReference>
<dbReference type="PDB" id="5DA3">
    <property type="method" value="X-ray"/>
    <property type="resolution" value="1.70 A"/>
    <property type="chains" value="A=185-446"/>
</dbReference>
<dbReference type="PDB" id="5H2U">
    <property type="method" value="X-ray"/>
    <property type="resolution" value="2.24 A"/>
    <property type="chains" value="A/B/C/D=185-446"/>
</dbReference>
<dbReference type="PDB" id="6CZ2">
    <property type="method" value="X-ray"/>
    <property type="resolution" value="2.50 A"/>
    <property type="chains" value="A=182-443"/>
</dbReference>
<dbReference type="PDB" id="6CZ3">
    <property type="method" value="X-ray"/>
    <property type="resolution" value="1.80 A"/>
    <property type="chains" value="A=182-443"/>
</dbReference>
<dbReference type="PDB" id="6CZ4">
    <property type="method" value="X-ray"/>
    <property type="resolution" value="1.50 A"/>
    <property type="chains" value="A=182-443"/>
</dbReference>
<dbReference type="PDB" id="8S1C">
    <property type="method" value="X-ray"/>
    <property type="resolution" value="1.75 A"/>
    <property type="chains" value="A/B=11-72"/>
</dbReference>
<dbReference type="PDBsum" id="1RJA"/>
<dbReference type="PDBsum" id="2KGT"/>
<dbReference type="PDBsum" id="5D7V"/>
<dbReference type="PDBsum" id="5DA3"/>
<dbReference type="PDBsum" id="5H2U"/>
<dbReference type="PDBsum" id="6CZ2"/>
<dbReference type="PDBsum" id="6CZ3"/>
<dbReference type="PDBsum" id="6CZ4"/>
<dbReference type="PDBsum" id="8S1C"/>
<dbReference type="BMRB" id="Q13882"/>
<dbReference type="SMR" id="Q13882"/>
<dbReference type="BioGRID" id="111720">
    <property type="interactions" value="103"/>
</dbReference>
<dbReference type="DIP" id="DIP-39785N"/>
<dbReference type="FunCoup" id="Q13882">
    <property type="interactions" value="312"/>
</dbReference>
<dbReference type="IntAct" id="Q13882">
    <property type="interactions" value="74"/>
</dbReference>
<dbReference type="MINT" id="Q13882"/>
<dbReference type="STRING" id="9606.ENSP00000442460"/>
<dbReference type="BindingDB" id="Q13882"/>
<dbReference type="ChEMBL" id="CHEMBL4601"/>
<dbReference type="DrugBank" id="DB12010">
    <property type="generic name" value="Fostamatinib"/>
</dbReference>
<dbReference type="DrugBank" id="DB11800">
    <property type="generic name" value="Tivozanib"/>
</dbReference>
<dbReference type="DrugBank" id="DB05294">
    <property type="generic name" value="Vandetanib"/>
</dbReference>
<dbReference type="DrugBank" id="DB15035">
    <property type="generic name" value="Zanubrutinib"/>
</dbReference>
<dbReference type="DrugCentral" id="Q13882"/>
<dbReference type="GuidetoPHARMACOLOGY" id="2182"/>
<dbReference type="GlyGen" id="Q13882">
    <property type="glycosylation" value="1 site, 1 O-linked glycan (1 site)"/>
</dbReference>
<dbReference type="iPTMnet" id="Q13882"/>
<dbReference type="PhosphoSitePlus" id="Q13882"/>
<dbReference type="BioMuta" id="PTK6"/>
<dbReference type="DMDM" id="8928302"/>
<dbReference type="CPTAC" id="CPTAC-2842"/>
<dbReference type="CPTAC" id="CPTAC-2880"/>
<dbReference type="jPOST" id="Q13882"/>
<dbReference type="MassIVE" id="Q13882"/>
<dbReference type="PaxDb" id="9606-ENSP00000442460"/>
<dbReference type="PeptideAtlas" id="Q13882"/>
<dbReference type="ProteomicsDB" id="59709">
    <molecule id="Q13882-1"/>
</dbReference>
<dbReference type="ProteomicsDB" id="59710">
    <molecule id="Q13882-2"/>
</dbReference>
<dbReference type="Antibodypedia" id="29774">
    <property type="antibodies" value="543 antibodies from 38 providers"/>
</dbReference>
<dbReference type="DNASU" id="5753"/>
<dbReference type="Ensembl" id="ENST00000217185.3">
    <molecule id="Q13882-2"/>
    <property type="protein sequence ID" value="ENSP00000217185.3"/>
    <property type="gene ID" value="ENSG00000101213.7"/>
</dbReference>
<dbReference type="Ensembl" id="ENST00000542869.3">
    <molecule id="Q13882-1"/>
    <property type="protein sequence ID" value="ENSP00000442460.2"/>
    <property type="gene ID" value="ENSG00000101213.7"/>
</dbReference>
<dbReference type="GeneID" id="5753"/>
<dbReference type="KEGG" id="hsa:5753"/>
<dbReference type="MANE-Select" id="ENST00000542869.3">
    <property type="protein sequence ID" value="ENSP00000442460.2"/>
    <property type="RefSeq nucleotide sequence ID" value="NM_005975.4"/>
    <property type="RefSeq protein sequence ID" value="NP_005966.1"/>
</dbReference>
<dbReference type="UCSC" id="uc002yfg.5">
    <molecule id="Q13882-1"/>
    <property type="organism name" value="human"/>
</dbReference>
<dbReference type="AGR" id="HGNC:9617"/>
<dbReference type="CTD" id="5753"/>
<dbReference type="DisGeNET" id="5753"/>
<dbReference type="GeneCards" id="PTK6"/>
<dbReference type="HGNC" id="HGNC:9617">
    <property type="gene designation" value="PTK6"/>
</dbReference>
<dbReference type="HPA" id="ENSG00000101213">
    <property type="expression patterns" value="Tissue enhanced (esophagus, skin, vagina)"/>
</dbReference>
<dbReference type="MIM" id="602004">
    <property type="type" value="gene"/>
</dbReference>
<dbReference type="neXtProt" id="NX_Q13882"/>
<dbReference type="OpenTargets" id="ENSG00000101213"/>
<dbReference type="PharmGKB" id="PA33960"/>
<dbReference type="VEuPathDB" id="HostDB:ENSG00000101213"/>
<dbReference type="eggNOG" id="KOG0197">
    <property type="taxonomic scope" value="Eukaryota"/>
</dbReference>
<dbReference type="GeneTree" id="ENSGT00940000161218"/>
<dbReference type="HOGENOM" id="CLU_000288_7_2_1"/>
<dbReference type="InParanoid" id="Q13882"/>
<dbReference type="OMA" id="LWKGQVR"/>
<dbReference type="OrthoDB" id="4062651at2759"/>
<dbReference type="PAN-GO" id="Q13882">
    <property type="GO annotations" value="6 GO annotations based on evolutionary models"/>
</dbReference>
<dbReference type="PhylomeDB" id="Q13882"/>
<dbReference type="TreeFam" id="TF351634"/>
<dbReference type="BRENDA" id="2.7.10.2">
    <property type="organism ID" value="2681"/>
</dbReference>
<dbReference type="PathwayCommons" id="Q13882"/>
<dbReference type="Reactome" id="R-HSA-187577">
    <property type="pathway name" value="SCF(Skp2)-mediated degradation of p27/p21"/>
</dbReference>
<dbReference type="Reactome" id="R-HSA-69231">
    <property type="pathway name" value="Cyclin D associated events in G1"/>
</dbReference>
<dbReference type="Reactome" id="R-HSA-8847993">
    <property type="pathway name" value="ERBB2 Activates PTK6 Signaling"/>
</dbReference>
<dbReference type="Reactome" id="R-HSA-8849468">
    <property type="pathway name" value="PTK6 Regulates Proteins Involved in RNA Processing"/>
</dbReference>
<dbReference type="Reactome" id="R-HSA-8849469">
    <property type="pathway name" value="PTK6 Regulates RTKs and Their Effectors AKT1 and DOK1"/>
</dbReference>
<dbReference type="Reactome" id="R-HSA-8849470">
    <property type="pathway name" value="PTK6 Regulates Cell Cycle"/>
</dbReference>
<dbReference type="Reactome" id="R-HSA-8849471">
    <property type="pathway name" value="PTK6 Regulates RHO GTPases, RAS GTPase and MAP kinases"/>
</dbReference>
<dbReference type="Reactome" id="R-HSA-8849472">
    <property type="pathway name" value="PTK6 Down-Regulation"/>
</dbReference>
<dbReference type="Reactome" id="R-HSA-8849473">
    <property type="pathway name" value="PTK6 Expression"/>
</dbReference>
<dbReference type="Reactome" id="R-HSA-8849474">
    <property type="pathway name" value="PTK6 Activates STAT3"/>
</dbReference>
<dbReference type="Reactome" id="R-HSA-8857538">
    <property type="pathway name" value="PTK6 promotes HIF1A stabilization"/>
</dbReference>
<dbReference type="Reactome" id="R-HSA-9707564">
    <property type="pathway name" value="Cytoprotection by HMOX1"/>
</dbReference>
<dbReference type="SABIO-RK" id="Q13882"/>
<dbReference type="SignaLink" id="Q13882"/>
<dbReference type="SIGNOR" id="Q13882"/>
<dbReference type="BioGRID-ORCS" id="5753">
    <property type="hits" value="17 hits in 1179 CRISPR screens"/>
</dbReference>
<dbReference type="EvolutionaryTrace" id="Q13882"/>
<dbReference type="GeneWiki" id="PTK6"/>
<dbReference type="GenomeRNAi" id="5753"/>
<dbReference type="Pharos" id="Q13882">
    <property type="development level" value="Tchem"/>
</dbReference>
<dbReference type="PRO" id="PR:Q13882"/>
<dbReference type="Proteomes" id="UP000005640">
    <property type="component" value="Chromosome 20"/>
</dbReference>
<dbReference type="RNAct" id="Q13882">
    <property type="molecule type" value="protein"/>
</dbReference>
<dbReference type="Bgee" id="ENSG00000101213">
    <property type="expression patterns" value="Expressed in esophagus squamous epithelium and 125 other cell types or tissues"/>
</dbReference>
<dbReference type="GO" id="GO:0005737">
    <property type="term" value="C:cytoplasm"/>
    <property type="evidence" value="ECO:0000314"/>
    <property type="project" value="UniProtKB"/>
</dbReference>
<dbReference type="GO" id="GO:0005829">
    <property type="term" value="C:cytosol"/>
    <property type="evidence" value="ECO:0000314"/>
    <property type="project" value="HPA"/>
</dbReference>
<dbReference type="GO" id="GO:0016604">
    <property type="term" value="C:nuclear body"/>
    <property type="evidence" value="ECO:0000314"/>
    <property type="project" value="HPA"/>
</dbReference>
<dbReference type="GO" id="GO:0005654">
    <property type="term" value="C:nucleoplasm"/>
    <property type="evidence" value="ECO:0000314"/>
    <property type="project" value="HPA"/>
</dbReference>
<dbReference type="GO" id="GO:0005634">
    <property type="term" value="C:nucleus"/>
    <property type="evidence" value="ECO:0000314"/>
    <property type="project" value="UniProtKB"/>
</dbReference>
<dbReference type="GO" id="GO:0005886">
    <property type="term" value="C:plasma membrane"/>
    <property type="evidence" value="ECO:0000314"/>
    <property type="project" value="HPA"/>
</dbReference>
<dbReference type="GO" id="GO:0001726">
    <property type="term" value="C:ruffle"/>
    <property type="evidence" value="ECO:0000314"/>
    <property type="project" value="UniProtKB"/>
</dbReference>
<dbReference type="GO" id="GO:0005524">
    <property type="term" value="F:ATP binding"/>
    <property type="evidence" value="ECO:0007669"/>
    <property type="project" value="UniProtKB-KW"/>
</dbReference>
<dbReference type="GO" id="GO:0042802">
    <property type="term" value="F:identical protein binding"/>
    <property type="evidence" value="ECO:0000353"/>
    <property type="project" value="IntAct"/>
</dbReference>
<dbReference type="GO" id="GO:0004715">
    <property type="term" value="F:non-membrane spanning protein tyrosine kinase activity"/>
    <property type="evidence" value="ECO:0000314"/>
    <property type="project" value="UniProtKB"/>
</dbReference>
<dbReference type="GO" id="GO:0004713">
    <property type="term" value="F:protein tyrosine kinase activity"/>
    <property type="evidence" value="ECO:0000269"/>
    <property type="project" value="Reactome"/>
</dbReference>
<dbReference type="GO" id="GO:0005102">
    <property type="term" value="F:signaling receptor binding"/>
    <property type="evidence" value="ECO:0000318"/>
    <property type="project" value="GO_Central"/>
</dbReference>
<dbReference type="GO" id="GO:0030154">
    <property type="term" value="P:cell differentiation"/>
    <property type="evidence" value="ECO:0000318"/>
    <property type="project" value="GO_Central"/>
</dbReference>
<dbReference type="GO" id="GO:0016477">
    <property type="term" value="P:cell migration"/>
    <property type="evidence" value="ECO:0000314"/>
    <property type="project" value="UniProtKB"/>
</dbReference>
<dbReference type="GO" id="GO:0007169">
    <property type="term" value="P:cell surface receptor protein tyrosine kinase signaling pathway"/>
    <property type="evidence" value="ECO:0000318"/>
    <property type="project" value="GO_Central"/>
</dbReference>
<dbReference type="GO" id="GO:0071300">
    <property type="term" value="P:cellular response to retinoic acid"/>
    <property type="evidence" value="ECO:0000315"/>
    <property type="project" value="BHF-UCL"/>
</dbReference>
<dbReference type="GO" id="GO:0038128">
    <property type="term" value="P:ERBB2 signaling pathway"/>
    <property type="evidence" value="ECO:0000304"/>
    <property type="project" value="Reactome"/>
</dbReference>
<dbReference type="GO" id="GO:0060575">
    <property type="term" value="P:intestinal epithelial cell differentiation"/>
    <property type="evidence" value="ECO:0007669"/>
    <property type="project" value="Ensembl"/>
</dbReference>
<dbReference type="GO" id="GO:0045926">
    <property type="term" value="P:negative regulation of growth"/>
    <property type="evidence" value="ECO:0007669"/>
    <property type="project" value="Ensembl"/>
</dbReference>
<dbReference type="GO" id="GO:0061099">
    <property type="term" value="P:negative regulation of protein tyrosine kinase activity"/>
    <property type="evidence" value="ECO:0000314"/>
    <property type="project" value="UniProtKB"/>
</dbReference>
<dbReference type="GO" id="GO:0045787">
    <property type="term" value="P:positive regulation of cell cycle"/>
    <property type="evidence" value="ECO:0000304"/>
    <property type="project" value="Reactome"/>
</dbReference>
<dbReference type="GO" id="GO:0045740">
    <property type="term" value="P:positive regulation of DNA replication"/>
    <property type="evidence" value="ECO:0000304"/>
    <property type="project" value="Reactome"/>
</dbReference>
<dbReference type="GO" id="GO:0045742">
    <property type="term" value="P:positive regulation of epidermal growth factor receptor signaling pathway"/>
    <property type="evidence" value="ECO:0000304"/>
    <property type="project" value="Reactome"/>
</dbReference>
<dbReference type="GO" id="GO:0010976">
    <property type="term" value="P:positive regulation of neuron projection development"/>
    <property type="evidence" value="ECO:0000315"/>
    <property type="project" value="BHF-UCL"/>
</dbReference>
<dbReference type="GO" id="GO:0046427">
    <property type="term" value="P:positive regulation of receptor signaling pathway via JAK-STAT"/>
    <property type="evidence" value="ECO:0000304"/>
    <property type="project" value="Reactome"/>
</dbReference>
<dbReference type="GO" id="GO:0046777">
    <property type="term" value="P:protein autophosphorylation"/>
    <property type="evidence" value="ECO:0000315"/>
    <property type="project" value="UniProtKB"/>
</dbReference>
<dbReference type="GO" id="GO:0006468">
    <property type="term" value="P:protein phosphorylation"/>
    <property type="evidence" value="ECO:0000304"/>
    <property type="project" value="ProtInc"/>
</dbReference>
<dbReference type="GO" id="GO:0007260">
    <property type="term" value="P:tyrosine phosphorylation of STAT protein"/>
    <property type="evidence" value="ECO:0000314"/>
    <property type="project" value="UniProtKB"/>
</dbReference>
<dbReference type="CDD" id="cd05148">
    <property type="entry name" value="PTKc_Srm_Brk"/>
    <property type="match status" value="1"/>
</dbReference>
<dbReference type="CDD" id="cd10358">
    <property type="entry name" value="SH2_PTK6_Brk"/>
    <property type="match status" value="1"/>
</dbReference>
<dbReference type="CDD" id="cd11847">
    <property type="entry name" value="SH3_Brk"/>
    <property type="match status" value="1"/>
</dbReference>
<dbReference type="FunFam" id="1.10.510.10:FF:000399">
    <property type="entry name" value="Tyrosine-protein kinase"/>
    <property type="match status" value="1"/>
</dbReference>
<dbReference type="FunFam" id="2.30.30.40:FF:000229">
    <property type="entry name" value="Tyrosine-protein kinase"/>
    <property type="match status" value="1"/>
</dbReference>
<dbReference type="FunFam" id="3.30.200.20:FF:000053">
    <property type="entry name" value="Tyrosine-protein kinase"/>
    <property type="match status" value="1"/>
</dbReference>
<dbReference type="FunFam" id="3.30.505.10:FF:000074">
    <property type="entry name" value="Tyrosine-protein kinase"/>
    <property type="match status" value="1"/>
</dbReference>
<dbReference type="Gene3D" id="3.30.200.20">
    <property type="entry name" value="Phosphorylase Kinase, domain 1"/>
    <property type="match status" value="1"/>
</dbReference>
<dbReference type="Gene3D" id="3.30.505.10">
    <property type="entry name" value="SH2 domain"/>
    <property type="match status" value="1"/>
</dbReference>
<dbReference type="Gene3D" id="2.30.30.40">
    <property type="entry name" value="SH3 Domains"/>
    <property type="match status" value="1"/>
</dbReference>
<dbReference type="Gene3D" id="1.10.510.10">
    <property type="entry name" value="Transferase(Phosphotransferase) domain 1"/>
    <property type="match status" value="1"/>
</dbReference>
<dbReference type="InterPro" id="IPR011009">
    <property type="entry name" value="Kinase-like_dom_sf"/>
</dbReference>
<dbReference type="InterPro" id="IPR050198">
    <property type="entry name" value="Non-receptor_tyrosine_kinases"/>
</dbReference>
<dbReference type="InterPro" id="IPR000719">
    <property type="entry name" value="Prot_kinase_dom"/>
</dbReference>
<dbReference type="InterPro" id="IPR017441">
    <property type="entry name" value="Protein_kinase_ATP_BS"/>
</dbReference>
<dbReference type="InterPro" id="IPR035846">
    <property type="entry name" value="PTK6_SH2"/>
</dbReference>
<dbReference type="InterPro" id="IPR001245">
    <property type="entry name" value="Ser-Thr/Tyr_kinase_cat_dom"/>
</dbReference>
<dbReference type="InterPro" id="IPR000980">
    <property type="entry name" value="SH2"/>
</dbReference>
<dbReference type="InterPro" id="IPR036860">
    <property type="entry name" value="SH2_dom_sf"/>
</dbReference>
<dbReference type="InterPro" id="IPR036028">
    <property type="entry name" value="SH3-like_dom_sf"/>
</dbReference>
<dbReference type="InterPro" id="IPR001452">
    <property type="entry name" value="SH3_domain"/>
</dbReference>
<dbReference type="InterPro" id="IPR008266">
    <property type="entry name" value="Tyr_kinase_AS"/>
</dbReference>
<dbReference type="InterPro" id="IPR020635">
    <property type="entry name" value="Tyr_kinase_cat_dom"/>
</dbReference>
<dbReference type="PANTHER" id="PTHR24418">
    <property type="entry name" value="TYROSINE-PROTEIN KINASE"/>
    <property type="match status" value="1"/>
</dbReference>
<dbReference type="Pfam" id="PF07714">
    <property type="entry name" value="PK_Tyr_Ser-Thr"/>
    <property type="match status" value="1"/>
</dbReference>
<dbReference type="Pfam" id="PF00017">
    <property type="entry name" value="SH2"/>
    <property type="match status" value="1"/>
</dbReference>
<dbReference type="Pfam" id="PF00018">
    <property type="entry name" value="SH3_1"/>
    <property type="match status" value="1"/>
</dbReference>
<dbReference type="PRINTS" id="PR00401">
    <property type="entry name" value="SH2DOMAIN"/>
</dbReference>
<dbReference type="PRINTS" id="PR00452">
    <property type="entry name" value="SH3DOMAIN"/>
</dbReference>
<dbReference type="PRINTS" id="PR00109">
    <property type="entry name" value="TYRKINASE"/>
</dbReference>
<dbReference type="SMART" id="SM00252">
    <property type="entry name" value="SH2"/>
    <property type="match status" value="1"/>
</dbReference>
<dbReference type="SMART" id="SM00326">
    <property type="entry name" value="SH3"/>
    <property type="match status" value="1"/>
</dbReference>
<dbReference type="SMART" id="SM00219">
    <property type="entry name" value="TyrKc"/>
    <property type="match status" value="1"/>
</dbReference>
<dbReference type="SUPFAM" id="SSF56112">
    <property type="entry name" value="Protein kinase-like (PK-like)"/>
    <property type="match status" value="1"/>
</dbReference>
<dbReference type="SUPFAM" id="SSF55550">
    <property type="entry name" value="SH2 domain"/>
    <property type="match status" value="1"/>
</dbReference>
<dbReference type="SUPFAM" id="SSF50044">
    <property type="entry name" value="SH3-domain"/>
    <property type="match status" value="1"/>
</dbReference>
<dbReference type="PROSITE" id="PS00107">
    <property type="entry name" value="PROTEIN_KINASE_ATP"/>
    <property type="match status" value="1"/>
</dbReference>
<dbReference type="PROSITE" id="PS50011">
    <property type="entry name" value="PROTEIN_KINASE_DOM"/>
    <property type="match status" value="1"/>
</dbReference>
<dbReference type="PROSITE" id="PS00109">
    <property type="entry name" value="PROTEIN_KINASE_TYR"/>
    <property type="match status" value="1"/>
</dbReference>
<dbReference type="PROSITE" id="PS50001">
    <property type="entry name" value="SH2"/>
    <property type="match status" value="1"/>
</dbReference>
<dbReference type="PROSITE" id="PS50002">
    <property type="entry name" value="SH3"/>
    <property type="match status" value="1"/>
</dbReference>
<organism>
    <name type="scientific">Homo sapiens</name>
    <name type="common">Human</name>
    <dbReference type="NCBI Taxonomy" id="9606"/>
    <lineage>
        <taxon>Eukaryota</taxon>
        <taxon>Metazoa</taxon>
        <taxon>Chordata</taxon>
        <taxon>Craniata</taxon>
        <taxon>Vertebrata</taxon>
        <taxon>Euteleostomi</taxon>
        <taxon>Mammalia</taxon>
        <taxon>Eutheria</taxon>
        <taxon>Euarchontoglires</taxon>
        <taxon>Primates</taxon>
        <taxon>Haplorrhini</taxon>
        <taxon>Catarrhini</taxon>
        <taxon>Hominidae</taxon>
        <taxon>Homo</taxon>
    </lineage>
</organism>
<reference key="1">
    <citation type="journal article" date="1994" name="Oncogene">
        <title>Cloning and characterisation of cDNAs encoding a novel non-receptor tyrosine kinase, brk, expressed in human breast tumours.</title>
        <authorList>
            <person name="Mitchell P.J."/>
            <person name="Barker K.T."/>
            <person name="Martindale J.E."/>
            <person name="Kamalati T."/>
            <person name="Lowe P.N."/>
            <person name="Page M.J."/>
            <person name="Gusterson B.A."/>
            <person name="Crompton M.R."/>
        </authorList>
    </citation>
    <scope>NUCLEOTIDE SEQUENCE [MRNA] (ISOFORM 1)</scope>
    <source>
        <tissue>Mammary tumor</tissue>
    </source>
</reference>
<reference key="2">
    <citation type="journal article" date="1997" name="Oncogene">
        <title>Characterisation and chromosome mapping of the human non receptor tyrosine kinase gene, brk.</title>
        <authorList>
            <person name="Mitchell P.J."/>
            <person name="Barker K.T."/>
            <person name="Shipley J."/>
            <person name="Crompton M.R."/>
        </authorList>
    </citation>
    <scope>NUCLEOTIDE SEQUENCE [MRNA] (ISOFORMS 1 AND 2)</scope>
</reference>
<reference key="3">
    <citation type="journal article" date="1998" name="Mol. Cells">
        <title>Exon-intron structure of the human PTK6 gene demonstrates that PTK6 constitutes a distinct family of non-receptor tyrosine kinase.</title>
        <authorList>
            <person name="Lee H.-Y."/>
            <person name="Kim M."/>
            <person name="Lee K.-H."/>
            <person name="Kang K.-N."/>
            <person name="Lee S.-T."/>
        </authorList>
    </citation>
    <scope>NUCLEOTIDE SEQUENCE [MRNA] (ISOFORM 1)</scope>
    <source>
        <tissue>Melanocyte</tissue>
    </source>
</reference>
<reference key="4">
    <citation type="journal article" date="2004" name="Nat. Genet.">
        <title>Complete sequencing and characterization of 21,243 full-length human cDNAs.</title>
        <authorList>
            <person name="Ota T."/>
            <person name="Suzuki Y."/>
            <person name="Nishikawa T."/>
            <person name="Otsuki T."/>
            <person name="Sugiyama T."/>
            <person name="Irie R."/>
            <person name="Wakamatsu A."/>
            <person name="Hayashi K."/>
            <person name="Sato H."/>
            <person name="Nagai K."/>
            <person name="Kimura K."/>
            <person name="Makita H."/>
            <person name="Sekine M."/>
            <person name="Obayashi M."/>
            <person name="Nishi T."/>
            <person name="Shibahara T."/>
            <person name="Tanaka T."/>
            <person name="Ishii S."/>
            <person name="Yamamoto J."/>
            <person name="Saito K."/>
            <person name="Kawai Y."/>
            <person name="Isono Y."/>
            <person name="Nakamura Y."/>
            <person name="Nagahari K."/>
            <person name="Murakami K."/>
            <person name="Yasuda T."/>
            <person name="Iwayanagi T."/>
            <person name="Wagatsuma M."/>
            <person name="Shiratori A."/>
            <person name="Sudo H."/>
            <person name="Hosoiri T."/>
            <person name="Kaku Y."/>
            <person name="Kodaira H."/>
            <person name="Kondo H."/>
            <person name="Sugawara M."/>
            <person name="Takahashi M."/>
            <person name="Kanda K."/>
            <person name="Yokoi T."/>
            <person name="Furuya T."/>
            <person name="Kikkawa E."/>
            <person name="Omura Y."/>
            <person name="Abe K."/>
            <person name="Kamihara K."/>
            <person name="Katsuta N."/>
            <person name="Sato K."/>
            <person name="Tanikawa M."/>
            <person name="Yamazaki M."/>
            <person name="Ninomiya K."/>
            <person name="Ishibashi T."/>
            <person name="Yamashita H."/>
            <person name="Murakawa K."/>
            <person name="Fujimori K."/>
            <person name="Tanai H."/>
            <person name="Kimata M."/>
            <person name="Watanabe M."/>
            <person name="Hiraoka S."/>
            <person name="Chiba Y."/>
            <person name="Ishida S."/>
            <person name="Ono Y."/>
            <person name="Takiguchi S."/>
            <person name="Watanabe S."/>
            <person name="Yosida M."/>
            <person name="Hotuta T."/>
            <person name="Kusano J."/>
            <person name="Kanehori K."/>
            <person name="Takahashi-Fujii A."/>
            <person name="Hara H."/>
            <person name="Tanase T.-O."/>
            <person name="Nomura Y."/>
            <person name="Togiya S."/>
            <person name="Komai F."/>
            <person name="Hara R."/>
            <person name="Takeuchi K."/>
            <person name="Arita M."/>
            <person name="Imose N."/>
            <person name="Musashino K."/>
            <person name="Yuuki H."/>
            <person name="Oshima A."/>
            <person name="Sasaki N."/>
            <person name="Aotsuka S."/>
            <person name="Yoshikawa Y."/>
            <person name="Matsunawa H."/>
            <person name="Ichihara T."/>
            <person name="Shiohata N."/>
            <person name="Sano S."/>
            <person name="Moriya S."/>
            <person name="Momiyama H."/>
            <person name="Satoh N."/>
            <person name="Takami S."/>
            <person name="Terashima Y."/>
            <person name="Suzuki O."/>
            <person name="Nakagawa S."/>
            <person name="Senoh A."/>
            <person name="Mizoguchi H."/>
            <person name="Goto Y."/>
            <person name="Shimizu F."/>
            <person name="Wakebe H."/>
            <person name="Hishigaki H."/>
            <person name="Watanabe T."/>
            <person name="Sugiyama A."/>
            <person name="Takemoto M."/>
            <person name="Kawakami B."/>
            <person name="Yamazaki M."/>
            <person name="Watanabe K."/>
            <person name="Kumagai A."/>
            <person name="Itakura S."/>
            <person name="Fukuzumi Y."/>
            <person name="Fujimori Y."/>
            <person name="Komiyama M."/>
            <person name="Tashiro H."/>
            <person name="Tanigami A."/>
            <person name="Fujiwara T."/>
            <person name="Ono T."/>
            <person name="Yamada K."/>
            <person name="Fujii Y."/>
            <person name="Ozaki K."/>
            <person name="Hirao M."/>
            <person name="Ohmori Y."/>
            <person name="Kawabata A."/>
            <person name="Hikiji T."/>
            <person name="Kobatake N."/>
            <person name="Inagaki H."/>
            <person name="Ikema Y."/>
            <person name="Okamoto S."/>
            <person name="Okitani R."/>
            <person name="Kawakami T."/>
            <person name="Noguchi S."/>
            <person name="Itoh T."/>
            <person name="Shigeta K."/>
            <person name="Senba T."/>
            <person name="Matsumura K."/>
            <person name="Nakajima Y."/>
            <person name="Mizuno T."/>
            <person name="Morinaga M."/>
            <person name="Sasaki M."/>
            <person name="Togashi T."/>
            <person name="Oyama M."/>
            <person name="Hata H."/>
            <person name="Watanabe M."/>
            <person name="Komatsu T."/>
            <person name="Mizushima-Sugano J."/>
            <person name="Satoh T."/>
            <person name="Shirai Y."/>
            <person name="Takahashi Y."/>
            <person name="Nakagawa K."/>
            <person name="Okumura K."/>
            <person name="Nagase T."/>
            <person name="Nomura N."/>
            <person name="Kikuchi H."/>
            <person name="Masuho Y."/>
            <person name="Yamashita R."/>
            <person name="Nakai K."/>
            <person name="Yada T."/>
            <person name="Nakamura Y."/>
            <person name="Ohara O."/>
            <person name="Isogai T."/>
            <person name="Sugano S."/>
        </authorList>
    </citation>
    <scope>NUCLEOTIDE SEQUENCE [LARGE SCALE MRNA] (ISOFORMS 1 AND 2)</scope>
    <source>
        <tissue>Urinary bladder</tissue>
    </source>
</reference>
<reference key="5">
    <citation type="journal article" date="2001" name="Nature">
        <title>The DNA sequence and comparative analysis of human chromosome 20.</title>
        <authorList>
            <person name="Deloukas P."/>
            <person name="Matthews L.H."/>
            <person name="Ashurst J.L."/>
            <person name="Burton J."/>
            <person name="Gilbert J.G.R."/>
            <person name="Jones M."/>
            <person name="Stavrides G."/>
            <person name="Almeida J.P."/>
            <person name="Babbage A.K."/>
            <person name="Bagguley C.L."/>
            <person name="Bailey J."/>
            <person name="Barlow K.F."/>
            <person name="Bates K.N."/>
            <person name="Beard L.M."/>
            <person name="Beare D.M."/>
            <person name="Beasley O.P."/>
            <person name="Bird C.P."/>
            <person name="Blakey S.E."/>
            <person name="Bridgeman A.M."/>
            <person name="Brown A.J."/>
            <person name="Buck D."/>
            <person name="Burrill W.D."/>
            <person name="Butler A.P."/>
            <person name="Carder C."/>
            <person name="Carter N.P."/>
            <person name="Chapman J.C."/>
            <person name="Clamp M."/>
            <person name="Clark G."/>
            <person name="Clark L.N."/>
            <person name="Clark S.Y."/>
            <person name="Clee C.M."/>
            <person name="Clegg S."/>
            <person name="Cobley V.E."/>
            <person name="Collier R.E."/>
            <person name="Connor R.E."/>
            <person name="Corby N.R."/>
            <person name="Coulson A."/>
            <person name="Coville G.J."/>
            <person name="Deadman R."/>
            <person name="Dhami P.D."/>
            <person name="Dunn M."/>
            <person name="Ellington A.G."/>
            <person name="Frankland J.A."/>
            <person name="Fraser A."/>
            <person name="French L."/>
            <person name="Garner P."/>
            <person name="Grafham D.V."/>
            <person name="Griffiths C."/>
            <person name="Griffiths M.N.D."/>
            <person name="Gwilliam R."/>
            <person name="Hall R.E."/>
            <person name="Hammond S."/>
            <person name="Harley J.L."/>
            <person name="Heath P.D."/>
            <person name="Ho S."/>
            <person name="Holden J.L."/>
            <person name="Howden P.J."/>
            <person name="Huckle E."/>
            <person name="Hunt A.R."/>
            <person name="Hunt S.E."/>
            <person name="Jekosch K."/>
            <person name="Johnson C.M."/>
            <person name="Johnson D."/>
            <person name="Kay M.P."/>
            <person name="Kimberley A.M."/>
            <person name="King A."/>
            <person name="Knights A."/>
            <person name="Laird G.K."/>
            <person name="Lawlor S."/>
            <person name="Lehvaeslaiho M.H."/>
            <person name="Leversha M.A."/>
            <person name="Lloyd C."/>
            <person name="Lloyd D.M."/>
            <person name="Lovell J.D."/>
            <person name="Marsh V.L."/>
            <person name="Martin S.L."/>
            <person name="McConnachie L.J."/>
            <person name="McLay K."/>
            <person name="McMurray A.A."/>
            <person name="Milne S.A."/>
            <person name="Mistry D."/>
            <person name="Moore M.J.F."/>
            <person name="Mullikin J.C."/>
            <person name="Nickerson T."/>
            <person name="Oliver K."/>
            <person name="Parker A."/>
            <person name="Patel R."/>
            <person name="Pearce T.A.V."/>
            <person name="Peck A.I."/>
            <person name="Phillimore B.J.C.T."/>
            <person name="Prathalingam S.R."/>
            <person name="Plumb R.W."/>
            <person name="Ramsay H."/>
            <person name="Rice C.M."/>
            <person name="Ross M.T."/>
            <person name="Scott C.E."/>
            <person name="Sehra H.K."/>
            <person name="Shownkeen R."/>
            <person name="Sims S."/>
            <person name="Skuce C.D."/>
            <person name="Smith M.L."/>
            <person name="Soderlund C."/>
            <person name="Steward C.A."/>
            <person name="Sulston J.E."/>
            <person name="Swann R.M."/>
            <person name="Sycamore N."/>
            <person name="Taylor R."/>
            <person name="Tee L."/>
            <person name="Thomas D.W."/>
            <person name="Thorpe A."/>
            <person name="Tracey A."/>
            <person name="Tromans A.C."/>
            <person name="Vaudin M."/>
            <person name="Wall M."/>
            <person name="Wallis J.M."/>
            <person name="Whitehead S.L."/>
            <person name="Whittaker P."/>
            <person name="Willey D.L."/>
            <person name="Williams L."/>
            <person name="Williams S.A."/>
            <person name="Wilming L."/>
            <person name="Wray P.W."/>
            <person name="Hubbard T."/>
            <person name="Durbin R.M."/>
            <person name="Bentley D.R."/>
            <person name="Beck S."/>
            <person name="Rogers J."/>
        </authorList>
    </citation>
    <scope>NUCLEOTIDE SEQUENCE [LARGE SCALE GENOMIC DNA]</scope>
</reference>
<reference key="6">
    <citation type="journal article" date="2004" name="Genome Res.">
        <title>The status, quality, and expansion of the NIH full-length cDNA project: the Mammalian Gene Collection (MGC).</title>
        <authorList>
            <consortium name="The MGC Project Team"/>
        </authorList>
    </citation>
    <scope>NUCLEOTIDE SEQUENCE [LARGE SCALE MRNA] (ISOFORM 1)</scope>
    <source>
        <tissue>Blood</tissue>
    </source>
</reference>
<reference key="7">
    <citation type="journal article" date="1996" name="J. Biol. Chem.">
        <title>Brk, a breast tumor-derived non-receptor protein-tyrosine kinase, sensitizes mammary epithelial cells to epidermal growth factor.</title>
        <authorList>
            <person name="Kamalati T."/>
            <person name="Jolin H.E."/>
            <person name="Mitchell P.J."/>
            <person name="Barker K.T."/>
            <person name="Jackson L.E."/>
            <person name="Dean C.J."/>
            <person name="Page M.J."/>
            <person name="Gusterson B.A."/>
            <person name="Crompton M.R."/>
        </authorList>
    </citation>
    <scope>CHARACTERIZATION</scope>
    <scope>INTERACTION WITH EGFR</scope>
    <scope>MUTAGENESIS OF LYS-219 AND TYR-447</scope>
</reference>
<reference key="8">
    <citation type="journal article" date="1997" name="Int. J. Cancer">
        <title>Loss of expression of receptor tyrosine kinase family genes PTK7 and SEK in metastatic melanoma.</title>
        <authorList>
            <person name="Easty D.J."/>
            <person name="Mitchell P.J."/>
            <person name="Patel K."/>
            <person name="Florenes V.A."/>
            <person name="Spritz R.A."/>
            <person name="Bennett D.C."/>
        </authorList>
    </citation>
    <scope>TISSUE SPECIFICITY</scope>
</reference>
<reference key="9">
    <citation type="journal article" date="2000" name="Oncogene">
        <title>A novel adaptor-like protein which is a substrate for the non-receptor tyrosine kinase, BRK.</title>
        <authorList>
            <person name="Mitchell P.J."/>
            <person name="Sara E.A."/>
            <person name="Crompton M.R."/>
        </authorList>
    </citation>
    <scope>FUNCTION</scope>
    <scope>INTERACTION WITH STAP2</scope>
    <scope>MUTAGENESIS OF TRP-44; TYR-66; ARG-105 AND LYS-219</scope>
</reference>
<reference key="10">
    <citation type="journal article" date="2000" name="Mol. Cell. Biol.">
        <title>Sik (BRK) phosphorylates Sam68 in the nucleus and negatively regulates its RNA binding ability.</title>
        <authorList>
            <person name="Derry J.J."/>
            <person name="Richard S."/>
            <person name="Valderrama Carvajal H."/>
            <person name="Ye X."/>
            <person name="Vasioukhin V."/>
            <person name="Cochrane A.W."/>
            <person name="Chen T."/>
            <person name="Tyner A.L."/>
        </authorList>
    </citation>
    <scope>SUBCELLULAR LOCATION</scope>
    <scope>PHOSPHORYLATION AT TYR-447</scope>
    <scope>INTERACTION WITH KHDRBS1</scope>
</reference>
<reference key="11">
    <citation type="journal article" date="2002" name="J. Biol. Chem.">
        <title>Regulation of the nonreceptor tyrosine kinase Brk by autophosphorylation and by autoinhibition.</title>
        <authorList>
            <person name="Qiu H."/>
            <person name="Miller W.T."/>
        </authorList>
    </citation>
    <scope>PHOSPHORYLATION AT TYR-13; TYR-61; TYR-66; TYR-114; TYR-342 AND TYR-351</scope>
    <scope>CATALYTIC ACTIVITY</scope>
    <scope>BIOPHYSICOCHEMICAL PROPERTIES</scope>
    <scope>MUTAGENESIS OF TYR-342 AND TYR-447</scope>
    <scope>ACTIVITY REGULATION</scope>
    <scope>IDENTIFICATION BY MASS SPECTROMETRY</scope>
</reference>
<reference key="12">
    <citation type="journal article" date="2003" name="Oncogene">
        <title>Altered localization and activity of the intracellular tyrosine kinase BRK/Sik in prostate tumor cells.</title>
        <authorList>
            <person name="Derry J.J."/>
            <person name="Prins G.S."/>
            <person name="Ray V."/>
            <person name="Tyner A.L."/>
        </authorList>
    </citation>
    <scope>SUBCELLULAR LOCATION</scope>
    <scope>TISSUE SPECIFICITY</scope>
</reference>
<reference key="13">
    <citation type="journal article" date="2004" name="J. Biol. Chem.">
        <title>The nuclear tyrosine kinase BRK/Sik phosphorylates and inhibits the RNA-binding activities of the Sam68-like mammalian proteins SLM-1 and SLM-2.</title>
        <authorList>
            <person name="Haegebarth A."/>
            <person name="Heap D."/>
            <person name="Bie W."/>
            <person name="Derry J.J."/>
            <person name="Richard S."/>
            <person name="Tyner A.L."/>
        </authorList>
    </citation>
    <scope>FUNCTION</scope>
    <scope>SUBCELLULAR LOCATION</scope>
    <scope>MUTAGENESIS OF LYS-219 AND TYR-447</scope>
    <scope>PHOSPHORYLATION</scope>
</reference>
<reference key="14">
    <citation type="journal article" date="2004" name="Mol. Cell. Biol.">
        <title>Brk activates rac1 and promotes cell migration and invasion by phosphorylating paxillin.</title>
        <authorList>
            <person name="Chen H.Y."/>
            <person name="Shen C.H."/>
            <person name="Tsai Y.T."/>
            <person name="Lin F.C."/>
            <person name="Huang Y.P."/>
            <person name="Chen R.H."/>
        </authorList>
    </citation>
    <scope>FUNCTION IN CELL MIGRATION</scope>
    <scope>FUNCTION IN PHOSPHORYLATION OF PXN</scope>
    <scope>SUBCELLULAR LOCATION</scope>
    <scope>INTERACTION WITH PXN</scope>
</reference>
<reference key="15">
    <citation type="journal article" date="2004" name="Oral Oncol.">
        <title>Differential expression of the non-receptor tyrosine kinase BRK in oral squamous cell carcinoma and normal oral epithelium.</title>
        <authorList>
            <person name="Petro B.J."/>
            <person name="Tan R.C."/>
            <person name="Tyner A.L."/>
            <person name="Lingen M.W."/>
            <person name="Watanabe K."/>
        </authorList>
    </citation>
    <scope>TISSUE SPECIFICITY</scope>
    <scope>SUBCELLULAR LOCATION</scope>
</reference>
<reference key="16">
    <citation type="journal article" date="2005" name="J. Biol. Chem.">
        <title>Regulated association of protein kinase B/Akt with breast tumor kinase.</title>
        <authorList>
            <person name="Zhang P."/>
            <person name="Ostrander J.H."/>
            <person name="Faivre E.J."/>
            <person name="Olsen A."/>
            <person name="Fitzsimmons D."/>
            <person name="Lange C.A."/>
        </authorList>
    </citation>
    <scope>FUNCTION IN PHOSPHORYLATION OF BTK</scope>
    <scope>INTERACTION WITH BTK</scope>
</reference>
<reference key="17">
    <citation type="journal article" date="2005" name="J. Biol. Chem.">
        <title>An intramolecular interaction between SH2-kinase linker and kinase domain is essential for the catalytic activity of protein-tyrosine kinase-6.</title>
        <authorList>
            <person name="Kim H.I.E."/>
            <person name="Lee S.T."/>
        </authorList>
    </citation>
    <scope>MUTAGENESIS OF TRP-184</scope>
    <scope>ACTIVITY REGULATION</scope>
</reference>
<reference key="18">
    <citation type="journal article" date="2005" name="J. Biol. Chem.">
        <title>Tyrosine phosphorylation of sam68 by breast tumor kinase regulates intranuclear localization and cell cycle progression.</title>
        <authorList>
            <person name="Lukong K.E."/>
            <person name="Larocque D."/>
            <person name="Tyner A.L."/>
            <person name="Richard S."/>
        </authorList>
    </citation>
    <scope>FUNCTION IN PHOSPHORYLATION OF KHDRBS1</scope>
</reference>
<reference key="19">
    <citation type="journal article" date="2005" name="Oncogene">
        <title>Interaction between Brk kinase and insulin receptor substrate-4.</title>
        <authorList>
            <person name="Qiu H."/>
            <person name="Zappacosta F."/>
            <person name="Su W."/>
            <person name="Annan R.S."/>
            <person name="Miller W.T."/>
        </authorList>
    </citation>
    <scope>INTERACTION WITH IRS4</scope>
    <scope>ACTIVITY REGULATION</scope>
</reference>
<reference key="20">
    <citation type="journal article" date="2006" name="Am. J. Pathol.">
        <title>Expression and oncogenic role of Brk (PTK6/Sik) protein tyrosine kinase in lymphocytes.</title>
        <authorList>
            <person name="Kasprzycka M."/>
            <person name="Majewski M."/>
            <person name="Wang Z.J."/>
            <person name="Ptasznik A."/>
            <person name="Wysocka M."/>
            <person name="Zhang Q."/>
            <person name="Marzec M."/>
            <person name="Gimotty P."/>
            <person name="Crompton M.R."/>
            <person name="Wasik M.A."/>
        </authorList>
    </citation>
    <scope>TISSUE SPECIFICITY</scope>
    <scope>SUBCELLULAR LOCATION</scope>
</reference>
<reference key="21">
    <citation type="journal article" date="2006" name="Oncogene">
        <title>Identification of STAT3 as a specific substrate of breast tumor kinase.</title>
        <authorList>
            <person name="Liu L."/>
            <person name="Gao Y."/>
            <person name="Qiu H."/>
            <person name="Miller W.T."/>
            <person name="Poli V."/>
            <person name="Reich N.C."/>
        </authorList>
    </citation>
    <scope>FUNCTION IN PHOSPHORYLATION OF STAT3</scope>
    <scope>ACTIVITY REGULATION</scope>
</reference>
<reference key="22">
    <citation type="journal article" date="2007" name="Biochem. Biophys. Res. Commun.">
        <title>Molecular dissection of the interaction between the SH3 domain and the SH2-Kinase Linker region in PTK6.</title>
        <authorList>
            <person name="Kim H.I.E."/>
            <person name="Jung J."/>
            <person name="Lee E.S."/>
            <person name="Kim Y.C."/>
            <person name="Lee W."/>
            <person name="Lee S.T."/>
        </authorList>
    </citation>
    <scope>ACTIVITY REGULATION</scope>
    <scope>MUTAGENESIS OF TRP-44</scope>
</reference>
<reference key="23">
    <citation type="journal article" date="2007" name="Breast Cancer Res.">
        <title>Signal transducer and activator of transcription 5b: a new target of breast tumor kinase/protein tyrosine kinase 6.</title>
        <authorList>
            <person name="Weaver A.M."/>
            <person name="Silva C.M."/>
        </authorList>
    </citation>
    <scope>FUNCTION IN PHOSPHORYLATION OF STAT5B</scope>
</reference>
<reference key="24">
    <citation type="journal article" date="2008" name="Cancer Res.">
        <title>Breast tumor kinase phosphorylates p190RhoGAP to regulate rho and ras and promote breast carcinoma growth, migration, and invasion.</title>
        <authorList>
            <person name="Shen C.H."/>
            <person name="Chen H.Y."/>
            <person name="Lin M.S."/>
            <person name="Li F.Y."/>
            <person name="Chang C.C."/>
            <person name="Kuo M.L."/>
            <person name="Settleman J."/>
            <person name="Chen R.H."/>
        </authorList>
    </citation>
    <scope>FUNCTION IN PHOSPHORYLATION OF ARHGAP35</scope>
</reference>
<reference key="25">
    <citation type="journal article" date="2008" name="Mol. Cancer Res.">
        <title>Distinct functions of natural ADAM-15 cytoplasmic domain variants in human mammary carcinoma.</title>
        <authorList>
            <person name="Zhong J.L."/>
            <person name="Poghosyan Z."/>
            <person name="Pennington C.J."/>
            <person name="Scott X."/>
            <person name="Handsley M.M."/>
            <person name="Warn A."/>
            <person name="Gavrilovic J."/>
            <person name="Honert K."/>
            <person name="Kruger A."/>
            <person name="Span P.N."/>
            <person name="Sweep F.C."/>
            <person name="Edwards D.R."/>
        </authorList>
    </citation>
    <scope>INTERACTION WITH ADAM15</scope>
</reference>
<reference key="26">
    <citation type="journal article" date="2008" name="Mol. Cell">
        <title>Kinase-selective enrichment enables quantitative phosphoproteomics of the kinome across the cell cycle.</title>
        <authorList>
            <person name="Daub H."/>
            <person name="Olsen J.V."/>
            <person name="Bairlein M."/>
            <person name="Gnad F."/>
            <person name="Oppermann F.S."/>
            <person name="Korner R."/>
            <person name="Greff Z."/>
            <person name="Keri G."/>
            <person name="Stemmann O."/>
            <person name="Mann M."/>
        </authorList>
    </citation>
    <scope>PHOSPHORYLATION [LARGE SCALE ANALYSIS] AT TYR-114</scope>
    <scope>IDENTIFICATION BY MASS SPECTROMETRY [LARGE SCALE ANALYSIS]</scope>
    <source>
        <tissue>Cervix carcinoma</tissue>
    </source>
</reference>
<reference key="27">
    <citation type="journal article" date="2008" name="Proc. Natl. Acad. Sci. U.S.A.">
        <title>Brk is coamplified with ErbB2 to promote proliferation in breast cancer.</title>
        <authorList>
            <person name="Xiang B."/>
            <person name="Chatti K."/>
            <person name="Qiu H."/>
            <person name="Lakshmi B."/>
            <person name="Krasnitz A."/>
            <person name="Hicks J."/>
            <person name="Yu M."/>
            <person name="Miller W.T."/>
            <person name="Muthuswamy S.K."/>
        </authorList>
    </citation>
    <scope>INTERACTION WITH ERBB2</scope>
</reference>
<reference key="28">
    <citation type="journal article" date="2009" name="Cell. Signal.">
        <title>BRK phosphorylates PSF promoting its cytoplasmic localization and cell cycle arrest.</title>
        <authorList>
            <person name="Lukong K.E."/>
            <person name="Huot M.E."/>
            <person name="Richard S."/>
        </authorList>
    </citation>
    <scope>INTERACTION WITH SFPQ</scope>
</reference>
<reference key="29">
    <citation type="journal article" date="2010" name="Biochim. Biophys. Acta">
        <title>Building a better understanding of the intracellular tyrosine kinase PTK6 - BRK by BRK.</title>
        <authorList>
            <person name="Brauer P.M."/>
            <person name="Tyner A.L."/>
        </authorList>
    </citation>
    <scope>REVIEW ON FUNCTION</scope>
</reference>
<reference key="30">
    <citation type="journal article" date="2010" name="J. Biol. Chem.">
        <title>PTK6 inhibits down-regulation of EGF receptor through phosphorylation of ARAP1.</title>
        <authorList>
            <person name="Kang S.A."/>
            <person name="Lee E.S."/>
            <person name="Yoon H.Y."/>
            <person name="Randazzo P.A."/>
            <person name="Lee S.T."/>
        </authorList>
    </citation>
    <scope>FUNCTION</scope>
    <scope>MUTAGENESIS OF ARG-105 AND LYS-219</scope>
</reference>
<reference key="31">
    <citation type="journal article" date="2010" name="J. Cell Sci.">
        <title>Identification of beta-catenin as a target of the intracellular tyrosine kinase PTK6.</title>
        <authorList>
            <person name="Palka-Hamblin H.L."/>
            <person name="Gierut J.J."/>
            <person name="Bie W."/>
            <person name="Brauer P.M."/>
            <person name="Zheng Y."/>
            <person name="Asara J.M."/>
            <person name="Tyner A.L."/>
        </authorList>
    </citation>
    <scope>PHOSPHORYLATION OF CTNNB1</scope>
    <scope>INTERACTION WITH CTNNB1</scope>
</reference>
<reference key="32">
    <citation type="journal article" date="2011" name="PLoS ONE">
        <title>The alternative splice variant of protein tyrosine kinase 6 negatively regulates growth and enhances PTK6-mediated inhibition of beta-catenin.</title>
        <authorList>
            <person name="Brauer P.M."/>
            <person name="Zheng Y."/>
            <person name="Evans M.D."/>
            <person name="Dominguez-Brauer C."/>
            <person name="Peehl D.M."/>
            <person name="Tyner A.L."/>
        </authorList>
    </citation>
    <scope>FUNCTION (ISOFORM 2)</scope>
    <scope>INTERACTION (ISOFORM 2) WITH KHDRBS1 AND CTNNB1</scope>
</reference>
<reference key="33">
    <citation type="journal article" date="2004" name="J. Biol. Chem.">
        <title>Solution structure and backbone dynamics of the non-receptor protein-tyrosine kinase-6 Src homology 2 domain.</title>
        <authorList>
            <person name="Hong E."/>
            <person name="Shin J."/>
            <person name="Kim H.I."/>
            <person name="Lee S.T."/>
            <person name="Lee W."/>
        </authorList>
    </citation>
    <scope>STRUCTURE BY NMR OF 75-174</scope>
</reference>
<reference key="34">
    <citation type="journal article" date="2016" name="Biochem. Biophys. Res. Commun.">
        <title>Crystal structure of the kinase domain of human protein tyrosine kinase 6 (PTK6) at 2.33 A resolution.</title>
        <authorList>
            <person name="Thakur M.K."/>
            <person name="Kumar A."/>
            <person name="Birudukota S."/>
            <person name="Swaminathan S."/>
            <person name="Tyagi R."/>
            <person name="Gosu R."/>
        </authorList>
    </citation>
    <scope>X-RAY CRYSTALLOGRAPHY (2.33 ANGSTROMS) OF 185-446</scope>
    <scope>CATALYTIC ACTIVITY</scope>
    <scope>MUTAGENESIS OF LYS-219</scope>
</reference>
<reference key="35">
    <citation type="journal article" date="2017" name="Biochem. Biophys. Res. Commun.">
        <title>Co-crystal structures of PTK6: With Dasatinib at 2.24 A, with novel imidazo[1,2-a]pyrazin-8-amine derivative inhibitor at 1.70 A resolution.</title>
        <authorList>
            <person name="Thakur M.K."/>
            <person name="Birudukota S."/>
            <person name="Swaminathan S."/>
            <person name="Battula S.K."/>
            <person name="Vadivelu S."/>
            <person name="Tyagi R."/>
            <person name="Gosu R."/>
        </authorList>
    </citation>
    <scope>X-RAY CRYSTALLOGRAPHY (1.70 ANGSTROMS) OF 185-446 IN COMPLEXES WITH INHIBITORS</scope>
    <scope>CATALYTIC ACTIVITY</scope>
</reference>
<reference key="36">
    <citation type="journal article" date="2007" name="Nature">
        <title>Patterns of somatic mutation in human cancer genomes.</title>
        <authorList>
            <person name="Greenman C."/>
            <person name="Stephens P."/>
            <person name="Smith R."/>
            <person name="Dalgliesh G.L."/>
            <person name="Hunter C."/>
            <person name="Bignell G."/>
            <person name="Davies H."/>
            <person name="Teague J."/>
            <person name="Butler A."/>
            <person name="Stevens C."/>
            <person name="Edkins S."/>
            <person name="O'Meara S."/>
            <person name="Vastrik I."/>
            <person name="Schmidt E.E."/>
            <person name="Avis T."/>
            <person name="Barthorpe S."/>
            <person name="Bhamra G."/>
            <person name="Buck G."/>
            <person name="Choudhury B."/>
            <person name="Clements J."/>
            <person name="Cole J."/>
            <person name="Dicks E."/>
            <person name="Forbes S."/>
            <person name="Gray K."/>
            <person name="Halliday K."/>
            <person name="Harrison R."/>
            <person name="Hills K."/>
            <person name="Hinton J."/>
            <person name="Jenkinson A."/>
            <person name="Jones D."/>
            <person name="Menzies A."/>
            <person name="Mironenko T."/>
            <person name="Perry J."/>
            <person name="Raine K."/>
            <person name="Richardson D."/>
            <person name="Shepherd R."/>
            <person name="Small A."/>
            <person name="Tofts C."/>
            <person name="Varian J."/>
            <person name="Webb T."/>
            <person name="West S."/>
            <person name="Widaa S."/>
            <person name="Yates A."/>
            <person name="Cahill D.P."/>
            <person name="Louis D.N."/>
            <person name="Goldstraw P."/>
            <person name="Nicholson A.G."/>
            <person name="Brasseur F."/>
            <person name="Looijenga L."/>
            <person name="Weber B.L."/>
            <person name="Chiew Y.-E."/>
            <person name="DeFazio A."/>
            <person name="Greaves M.F."/>
            <person name="Green A.R."/>
            <person name="Campbell P."/>
            <person name="Birney E."/>
            <person name="Easton D.F."/>
            <person name="Chenevix-Trench G."/>
            <person name="Tan M.-H."/>
            <person name="Khoo S.K."/>
            <person name="Teh B.T."/>
            <person name="Yuen S.T."/>
            <person name="Leung S.Y."/>
            <person name="Wooster R."/>
            <person name="Futreal P.A."/>
            <person name="Stratton M.R."/>
        </authorList>
    </citation>
    <scope>VARIANTS [LARGE SCALE ANALYSIS] PHE-16 AND THR-436</scope>
</reference>
<evidence type="ECO:0000250" key="1"/>
<evidence type="ECO:0000255" key="2">
    <source>
        <dbReference type="PROSITE-ProRule" id="PRU00159"/>
    </source>
</evidence>
<evidence type="ECO:0000255" key="3">
    <source>
        <dbReference type="PROSITE-ProRule" id="PRU00191"/>
    </source>
</evidence>
<evidence type="ECO:0000255" key="4">
    <source>
        <dbReference type="PROSITE-ProRule" id="PRU00192"/>
    </source>
</evidence>
<evidence type="ECO:0000255" key="5">
    <source>
        <dbReference type="PROSITE-ProRule" id="PRU10028"/>
    </source>
</evidence>
<evidence type="ECO:0000269" key="6">
    <source>
    </source>
</evidence>
<evidence type="ECO:0000269" key="7">
    <source>
    </source>
</evidence>
<evidence type="ECO:0000269" key="8">
    <source>
    </source>
</evidence>
<evidence type="ECO:0000269" key="9">
    <source>
    </source>
</evidence>
<evidence type="ECO:0000269" key="10">
    <source>
    </source>
</evidence>
<evidence type="ECO:0000269" key="11">
    <source>
    </source>
</evidence>
<evidence type="ECO:0000269" key="12">
    <source>
    </source>
</evidence>
<evidence type="ECO:0000269" key="13">
    <source>
    </source>
</evidence>
<evidence type="ECO:0000269" key="14">
    <source>
    </source>
</evidence>
<evidence type="ECO:0000269" key="15">
    <source>
    </source>
</evidence>
<evidence type="ECO:0000269" key="16">
    <source>
    </source>
</evidence>
<evidence type="ECO:0000269" key="17">
    <source>
    </source>
</evidence>
<evidence type="ECO:0000269" key="18">
    <source>
    </source>
</evidence>
<evidence type="ECO:0000269" key="19">
    <source>
    </source>
</evidence>
<evidence type="ECO:0000269" key="20">
    <source>
    </source>
</evidence>
<evidence type="ECO:0000269" key="21">
    <source>
    </source>
</evidence>
<evidence type="ECO:0000269" key="22">
    <source>
    </source>
</evidence>
<evidence type="ECO:0000269" key="23">
    <source>
    </source>
</evidence>
<evidence type="ECO:0000269" key="24">
    <source>
    </source>
</evidence>
<evidence type="ECO:0000269" key="25">
    <source>
    </source>
</evidence>
<evidence type="ECO:0000269" key="26">
    <source>
    </source>
</evidence>
<evidence type="ECO:0000269" key="27">
    <source>
    </source>
</evidence>
<evidence type="ECO:0000269" key="28">
    <source>
    </source>
</evidence>
<evidence type="ECO:0000303" key="29">
    <source>
    </source>
</evidence>
<evidence type="ECO:0000303" key="30">
    <source>
    </source>
</evidence>
<evidence type="ECO:0000305" key="31"/>
<evidence type="ECO:0000305" key="32">
    <source>
    </source>
</evidence>
<evidence type="ECO:0000305" key="33">
    <source>
    </source>
</evidence>
<evidence type="ECO:0007744" key="34">
    <source>
    </source>
</evidence>
<evidence type="ECO:0007829" key="35">
    <source>
        <dbReference type="PDB" id="1RJA"/>
    </source>
</evidence>
<evidence type="ECO:0007829" key="36">
    <source>
        <dbReference type="PDB" id="2KGT"/>
    </source>
</evidence>
<evidence type="ECO:0007829" key="37">
    <source>
        <dbReference type="PDB" id="5D7V"/>
    </source>
</evidence>
<evidence type="ECO:0007829" key="38">
    <source>
        <dbReference type="PDB" id="5DA3"/>
    </source>
</evidence>
<evidence type="ECO:0007829" key="39">
    <source>
        <dbReference type="PDB" id="6CZ2"/>
    </source>
</evidence>
<evidence type="ECO:0007829" key="40">
    <source>
        <dbReference type="PDB" id="6CZ4"/>
    </source>
</evidence>
<sequence length="451" mass="51834">MVSRDQAHLGPKYVGLWDFKSRTDEELSFRAGDVFHVARKEEQWWWATLLDEAGGAVAQGYVPHNYLAERETVESEPWFFGCISRSEAVRRLQAEGNATGAFLIRVSEKPSADYVLSVRDTQAVRHYKIWRRAGGRLHLNEAVSFLSLPELVNYHRAQSLSHGLRLAAPCRKHEPEPLPHWDDWERPREEFTLCRKLGSGYFGEVFEGLWKDRVQVAIKVISRDNLLHQQMLQSEIQAMKKLRHKHILALYAVVSVGDPVYIITELMAKGSLLELLRDSDEKVLPVSELLDIAWQVAEGMCYLESQNYIHRDLAARNILVGENTLCKVGDFGLARLIKEDVYLSHDHNIPYKWTAPEALSRGHYSTKSDVWSFGILLHEMFSRGQVPYPGMSNHEAFLRVDAGYRMPCPLECPPSVHKLMLTCWCRDPEQRPCFKALRERLSSFTSYENPT</sequence>
<keyword id="KW-0002">3D-structure</keyword>
<keyword id="KW-0025">Alternative splicing</keyword>
<keyword id="KW-0067">ATP-binding</keyword>
<keyword id="KW-0966">Cell projection</keyword>
<keyword id="KW-0963">Cytoplasm</keyword>
<keyword id="KW-0418">Kinase</keyword>
<keyword id="KW-0472">Membrane</keyword>
<keyword id="KW-0547">Nucleotide-binding</keyword>
<keyword id="KW-0539">Nucleus</keyword>
<keyword id="KW-0597">Phosphoprotein</keyword>
<keyword id="KW-1267">Proteomics identification</keyword>
<keyword id="KW-1185">Reference proteome</keyword>
<keyword id="KW-0727">SH2 domain</keyword>
<keyword id="KW-0728">SH3 domain</keyword>
<keyword id="KW-0808">Transferase</keyword>
<keyword id="KW-0829">Tyrosine-protein kinase</keyword>